<keyword id="KW-1185">Reference proteome</keyword>
<keyword id="KW-0687">Ribonucleoprotein</keyword>
<keyword id="KW-0689">Ribosomal protein</keyword>
<dbReference type="EMBL" id="AP008955">
    <property type="protein sequence ID" value="BAH44425.1"/>
    <property type="molecule type" value="Genomic_DNA"/>
</dbReference>
<dbReference type="RefSeq" id="WP_015891726.1">
    <property type="nucleotide sequence ID" value="NC_012491.1"/>
</dbReference>
<dbReference type="SMR" id="C0ZF66"/>
<dbReference type="STRING" id="358681.BBR47_34480"/>
<dbReference type="GeneID" id="87583878"/>
<dbReference type="KEGG" id="bbe:BBR47_34480"/>
<dbReference type="eggNOG" id="COG0052">
    <property type="taxonomic scope" value="Bacteria"/>
</dbReference>
<dbReference type="HOGENOM" id="CLU_040318_1_2_9"/>
<dbReference type="Proteomes" id="UP000001877">
    <property type="component" value="Chromosome"/>
</dbReference>
<dbReference type="GO" id="GO:0022627">
    <property type="term" value="C:cytosolic small ribosomal subunit"/>
    <property type="evidence" value="ECO:0007669"/>
    <property type="project" value="TreeGrafter"/>
</dbReference>
<dbReference type="GO" id="GO:0003735">
    <property type="term" value="F:structural constituent of ribosome"/>
    <property type="evidence" value="ECO:0007669"/>
    <property type="project" value="InterPro"/>
</dbReference>
<dbReference type="GO" id="GO:0006412">
    <property type="term" value="P:translation"/>
    <property type="evidence" value="ECO:0007669"/>
    <property type="project" value="UniProtKB-UniRule"/>
</dbReference>
<dbReference type="CDD" id="cd01425">
    <property type="entry name" value="RPS2"/>
    <property type="match status" value="1"/>
</dbReference>
<dbReference type="FunFam" id="1.10.287.610:FF:000001">
    <property type="entry name" value="30S ribosomal protein S2"/>
    <property type="match status" value="1"/>
</dbReference>
<dbReference type="Gene3D" id="3.40.50.10490">
    <property type="entry name" value="Glucose-6-phosphate isomerase like protein, domain 1"/>
    <property type="match status" value="1"/>
</dbReference>
<dbReference type="Gene3D" id="1.10.287.610">
    <property type="entry name" value="Helix hairpin bin"/>
    <property type="match status" value="1"/>
</dbReference>
<dbReference type="HAMAP" id="MF_00291_B">
    <property type="entry name" value="Ribosomal_uS2_B"/>
    <property type="match status" value="1"/>
</dbReference>
<dbReference type="InterPro" id="IPR001865">
    <property type="entry name" value="Ribosomal_uS2"/>
</dbReference>
<dbReference type="InterPro" id="IPR005706">
    <property type="entry name" value="Ribosomal_uS2_bac/mit/plastid"/>
</dbReference>
<dbReference type="InterPro" id="IPR018130">
    <property type="entry name" value="Ribosomal_uS2_CS"/>
</dbReference>
<dbReference type="InterPro" id="IPR023591">
    <property type="entry name" value="Ribosomal_uS2_flav_dom_sf"/>
</dbReference>
<dbReference type="NCBIfam" id="TIGR01011">
    <property type="entry name" value="rpsB_bact"/>
    <property type="match status" value="1"/>
</dbReference>
<dbReference type="PANTHER" id="PTHR12534">
    <property type="entry name" value="30S RIBOSOMAL PROTEIN S2 PROKARYOTIC AND ORGANELLAR"/>
    <property type="match status" value="1"/>
</dbReference>
<dbReference type="PANTHER" id="PTHR12534:SF0">
    <property type="entry name" value="SMALL RIBOSOMAL SUBUNIT PROTEIN US2M"/>
    <property type="match status" value="1"/>
</dbReference>
<dbReference type="Pfam" id="PF00318">
    <property type="entry name" value="Ribosomal_S2"/>
    <property type="match status" value="1"/>
</dbReference>
<dbReference type="PRINTS" id="PR00395">
    <property type="entry name" value="RIBOSOMALS2"/>
</dbReference>
<dbReference type="SUPFAM" id="SSF52313">
    <property type="entry name" value="Ribosomal protein S2"/>
    <property type="match status" value="1"/>
</dbReference>
<dbReference type="PROSITE" id="PS00962">
    <property type="entry name" value="RIBOSOMAL_S2_1"/>
    <property type="match status" value="1"/>
</dbReference>
<dbReference type="PROSITE" id="PS00963">
    <property type="entry name" value="RIBOSOMAL_S2_2"/>
    <property type="match status" value="1"/>
</dbReference>
<proteinExistence type="inferred from homology"/>
<evidence type="ECO:0000255" key="1">
    <source>
        <dbReference type="HAMAP-Rule" id="MF_00291"/>
    </source>
</evidence>
<evidence type="ECO:0000305" key="2"/>
<accession>C0ZF66</accession>
<feature type="chain" id="PRO_1000194322" description="Small ribosomal subunit protein uS2">
    <location>
        <begin position="1"/>
        <end position="236"/>
    </location>
</feature>
<reference key="1">
    <citation type="submission" date="2005-03" db="EMBL/GenBank/DDBJ databases">
        <title>Brevibacillus brevis strain 47, complete genome.</title>
        <authorList>
            <person name="Hosoyama A."/>
            <person name="Yamada R."/>
            <person name="Hongo Y."/>
            <person name="Terui Y."/>
            <person name="Ankai A."/>
            <person name="Masuyama W."/>
            <person name="Sekiguchi M."/>
            <person name="Takeda T."/>
            <person name="Asano K."/>
            <person name="Ohji S."/>
            <person name="Ichikawa N."/>
            <person name="Narita S."/>
            <person name="Aoki N."/>
            <person name="Miura H."/>
            <person name="Matsushita S."/>
            <person name="Sekigawa T."/>
            <person name="Yamagata H."/>
            <person name="Yoshikawa H."/>
            <person name="Udaka S."/>
            <person name="Tanikawa S."/>
            <person name="Fujita N."/>
        </authorList>
    </citation>
    <scope>NUCLEOTIDE SEQUENCE [LARGE SCALE GENOMIC DNA]</scope>
    <source>
        <strain>47 / JCM 6285 / NBRC 100599</strain>
    </source>
</reference>
<protein>
    <recommendedName>
        <fullName evidence="1">Small ribosomal subunit protein uS2</fullName>
    </recommendedName>
    <alternativeName>
        <fullName evidence="2">30S ribosomal protein S2</fullName>
    </alternativeName>
</protein>
<comment type="similarity">
    <text evidence="1">Belongs to the universal ribosomal protein uS2 family.</text>
</comment>
<sequence>MAVISMKQLLEAGVHFGHQTRRWNPKMARYIFTERNGIYIIDLQKTVKKVEEAYNFVRELAQDGGKILFVGTKKQAQESVKEEAERTGHYFINQRWLGGTLTNFTTIKKRTARLAELKRMENDGTFAVLPKKEVIVLRKEMDRLEKFLGGIAHMDKLPDALFVIDPRKERIAVAEARKLGIPIVAIVDTNCDPDEIDYVIPGNDDAIRAVKLLTAKMADALLEGNQGTEQQATTTA</sequence>
<gene>
    <name evidence="1" type="primary">rpsB</name>
    <name type="ordered locus">BBR47_34480</name>
</gene>
<name>RS2_BREBN</name>
<organism>
    <name type="scientific">Brevibacillus brevis (strain 47 / JCM 6285 / NBRC 100599)</name>
    <dbReference type="NCBI Taxonomy" id="358681"/>
    <lineage>
        <taxon>Bacteria</taxon>
        <taxon>Bacillati</taxon>
        <taxon>Bacillota</taxon>
        <taxon>Bacilli</taxon>
        <taxon>Bacillales</taxon>
        <taxon>Paenibacillaceae</taxon>
        <taxon>Brevibacillus</taxon>
    </lineage>
</organism>